<proteinExistence type="inferred from homology"/>
<comment type="function">
    <text evidence="1">Binds 23S rRNA and is also seen to make contacts with the A and possibly P site tRNAs.</text>
</comment>
<comment type="subunit">
    <text evidence="1">Part of the 50S ribosomal subunit.</text>
</comment>
<comment type="similarity">
    <text evidence="1">Belongs to the universal ribosomal protein uL16 family.</text>
</comment>
<organism>
    <name type="scientific">Brucella abortus biovar 1 (strain 9-941)</name>
    <dbReference type="NCBI Taxonomy" id="262698"/>
    <lineage>
        <taxon>Bacteria</taxon>
        <taxon>Pseudomonadati</taxon>
        <taxon>Pseudomonadota</taxon>
        <taxon>Alphaproteobacteria</taxon>
        <taxon>Hyphomicrobiales</taxon>
        <taxon>Brucellaceae</taxon>
        <taxon>Brucella/Ochrobactrum group</taxon>
        <taxon>Brucella</taxon>
    </lineage>
</organism>
<evidence type="ECO:0000255" key="1">
    <source>
        <dbReference type="HAMAP-Rule" id="MF_01342"/>
    </source>
</evidence>
<evidence type="ECO:0000305" key="2"/>
<dbReference type="EMBL" id="AE017223">
    <property type="protein sequence ID" value="AAX74569.1"/>
    <property type="molecule type" value="Genomic_DNA"/>
</dbReference>
<dbReference type="RefSeq" id="WP_002964355.1">
    <property type="nucleotide sequence ID" value="NC_006932.1"/>
</dbReference>
<dbReference type="SMR" id="P0C0Z3"/>
<dbReference type="EnsemblBacteria" id="AAX74569">
    <property type="protein sequence ID" value="AAX74569"/>
    <property type="gene ID" value="BruAb1_1231"/>
</dbReference>
<dbReference type="GeneID" id="97533531"/>
<dbReference type="KEGG" id="bmb:BruAb1_1231"/>
<dbReference type="HOGENOM" id="CLU_078858_2_1_5"/>
<dbReference type="Proteomes" id="UP000000540">
    <property type="component" value="Chromosome I"/>
</dbReference>
<dbReference type="GO" id="GO:0022625">
    <property type="term" value="C:cytosolic large ribosomal subunit"/>
    <property type="evidence" value="ECO:0007669"/>
    <property type="project" value="TreeGrafter"/>
</dbReference>
<dbReference type="GO" id="GO:0019843">
    <property type="term" value="F:rRNA binding"/>
    <property type="evidence" value="ECO:0007669"/>
    <property type="project" value="UniProtKB-UniRule"/>
</dbReference>
<dbReference type="GO" id="GO:0003735">
    <property type="term" value="F:structural constituent of ribosome"/>
    <property type="evidence" value="ECO:0007669"/>
    <property type="project" value="InterPro"/>
</dbReference>
<dbReference type="GO" id="GO:0000049">
    <property type="term" value="F:tRNA binding"/>
    <property type="evidence" value="ECO:0007669"/>
    <property type="project" value="UniProtKB-KW"/>
</dbReference>
<dbReference type="GO" id="GO:0006412">
    <property type="term" value="P:translation"/>
    <property type="evidence" value="ECO:0007669"/>
    <property type="project" value="UniProtKB-UniRule"/>
</dbReference>
<dbReference type="CDD" id="cd01433">
    <property type="entry name" value="Ribosomal_L16_L10e"/>
    <property type="match status" value="1"/>
</dbReference>
<dbReference type="FunFam" id="3.90.1170.10:FF:000001">
    <property type="entry name" value="50S ribosomal protein L16"/>
    <property type="match status" value="1"/>
</dbReference>
<dbReference type="Gene3D" id="3.90.1170.10">
    <property type="entry name" value="Ribosomal protein L10e/L16"/>
    <property type="match status" value="1"/>
</dbReference>
<dbReference type="HAMAP" id="MF_01342">
    <property type="entry name" value="Ribosomal_uL16"/>
    <property type="match status" value="1"/>
</dbReference>
<dbReference type="InterPro" id="IPR047873">
    <property type="entry name" value="Ribosomal_uL16"/>
</dbReference>
<dbReference type="InterPro" id="IPR000114">
    <property type="entry name" value="Ribosomal_uL16_bact-type"/>
</dbReference>
<dbReference type="InterPro" id="IPR020798">
    <property type="entry name" value="Ribosomal_uL16_CS"/>
</dbReference>
<dbReference type="InterPro" id="IPR016180">
    <property type="entry name" value="Ribosomal_uL16_dom"/>
</dbReference>
<dbReference type="InterPro" id="IPR036920">
    <property type="entry name" value="Ribosomal_uL16_sf"/>
</dbReference>
<dbReference type="NCBIfam" id="TIGR01164">
    <property type="entry name" value="rplP_bact"/>
    <property type="match status" value="1"/>
</dbReference>
<dbReference type="PANTHER" id="PTHR12220">
    <property type="entry name" value="50S/60S RIBOSOMAL PROTEIN L16"/>
    <property type="match status" value="1"/>
</dbReference>
<dbReference type="PANTHER" id="PTHR12220:SF13">
    <property type="entry name" value="LARGE RIBOSOMAL SUBUNIT PROTEIN UL16M"/>
    <property type="match status" value="1"/>
</dbReference>
<dbReference type="Pfam" id="PF00252">
    <property type="entry name" value="Ribosomal_L16"/>
    <property type="match status" value="1"/>
</dbReference>
<dbReference type="PRINTS" id="PR00060">
    <property type="entry name" value="RIBOSOMALL16"/>
</dbReference>
<dbReference type="SUPFAM" id="SSF54686">
    <property type="entry name" value="Ribosomal protein L16p/L10e"/>
    <property type="match status" value="1"/>
</dbReference>
<dbReference type="PROSITE" id="PS00586">
    <property type="entry name" value="RIBOSOMAL_L16_1"/>
    <property type="match status" value="1"/>
</dbReference>
<dbReference type="PROSITE" id="PS00701">
    <property type="entry name" value="RIBOSOMAL_L16_2"/>
    <property type="match status" value="1"/>
</dbReference>
<gene>
    <name evidence="1" type="primary">rplP</name>
    <name type="ordered locus">BruAb1_1231</name>
</gene>
<name>RL16_BRUAB</name>
<sequence length="137" mass="15501">MMQPKRTKFRKQFKGRIHGNSKGGTDLNFGAFGLKALEPERVTARQIEAARRAITRHMKRAGRVWIRIFPDLPVTSKPTEVRMGKGKGSVDYWACRVAPGRVMFELDGVPEDVAREALRLGAAKLPIKTRFIQRIAE</sequence>
<feature type="chain" id="PRO_0000062060" description="Large ribosomal subunit protein uL16">
    <location>
        <begin position="1"/>
        <end position="137"/>
    </location>
</feature>
<keyword id="KW-0687">Ribonucleoprotein</keyword>
<keyword id="KW-0689">Ribosomal protein</keyword>
<keyword id="KW-0694">RNA-binding</keyword>
<keyword id="KW-0699">rRNA-binding</keyword>
<keyword id="KW-0820">tRNA-binding</keyword>
<accession>P0C0Z3</accession>
<accession>Q57CR5</accession>
<reference key="1">
    <citation type="journal article" date="2005" name="J. Bacteriol.">
        <title>Completion of the genome sequence of Brucella abortus and comparison to the highly similar genomes of Brucella melitensis and Brucella suis.</title>
        <authorList>
            <person name="Halling S.M."/>
            <person name="Peterson-Burch B.D."/>
            <person name="Bricker B.J."/>
            <person name="Zuerner R.L."/>
            <person name="Qing Z."/>
            <person name="Li L.-L."/>
            <person name="Kapur V."/>
            <person name="Alt D.P."/>
            <person name="Olsen S.C."/>
        </authorList>
    </citation>
    <scope>NUCLEOTIDE SEQUENCE [LARGE SCALE GENOMIC DNA]</scope>
    <source>
        <strain>9-941</strain>
    </source>
</reference>
<protein>
    <recommendedName>
        <fullName evidence="1">Large ribosomal subunit protein uL16</fullName>
    </recommendedName>
    <alternativeName>
        <fullName evidence="2">50S ribosomal protein L16</fullName>
    </alternativeName>
</protein>